<gene>
    <name evidence="1" type="primary">rlmH</name>
    <name type="ordered locus">XfasM23_1807</name>
</gene>
<evidence type="ECO:0000255" key="1">
    <source>
        <dbReference type="HAMAP-Rule" id="MF_00658"/>
    </source>
</evidence>
<feature type="chain" id="PRO_0000366679" description="Ribosomal RNA large subunit methyltransferase H">
    <location>
        <begin position="1"/>
        <end position="157"/>
    </location>
</feature>
<feature type="binding site" evidence="1">
    <location>
        <position position="73"/>
    </location>
    <ligand>
        <name>S-adenosyl-L-methionine</name>
        <dbReference type="ChEBI" id="CHEBI:59789"/>
    </ligand>
</feature>
<feature type="binding site" evidence="1">
    <location>
        <position position="104"/>
    </location>
    <ligand>
        <name>S-adenosyl-L-methionine</name>
        <dbReference type="ChEBI" id="CHEBI:59789"/>
    </ligand>
</feature>
<feature type="binding site" evidence="1">
    <location>
        <begin position="123"/>
        <end position="128"/>
    </location>
    <ligand>
        <name>S-adenosyl-L-methionine</name>
        <dbReference type="ChEBI" id="CHEBI:59789"/>
    </ligand>
</feature>
<accession>B2I8D4</accession>
<organism>
    <name type="scientific">Xylella fastidiosa (strain M23)</name>
    <dbReference type="NCBI Taxonomy" id="405441"/>
    <lineage>
        <taxon>Bacteria</taxon>
        <taxon>Pseudomonadati</taxon>
        <taxon>Pseudomonadota</taxon>
        <taxon>Gammaproteobacteria</taxon>
        <taxon>Lysobacterales</taxon>
        <taxon>Lysobacteraceae</taxon>
        <taxon>Xylella</taxon>
    </lineage>
</organism>
<keyword id="KW-0963">Cytoplasm</keyword>
<keyword id="KW-0489">Methyltransferase</keyword>
<keyword id="KW-0698">rRNA processing</keyword>
<keyword id="KW-0949">S-adenosyl-L-methionine</keyword>
<keyword id="KW-0808">Transferase</keyword>
<protein>
    <recommendedName>
        <fullName evidence="1">Ribosomal RNA large subunit methyltransferase H</fullName>
        <ecNumber evidence="1">2.1.1.177</ecNumber>
    </recommendedName>
    <alternativeName>
        <fullName evidence="1">23S rRNA (pseudouridine1915-N3)-methyltransferase</fullName>
    </alternativeName>
    <alternativeName>
        <fullName evidence="1">23S rRNA m3Psi1915 methyltransferase</fullName>
    </alternativeName>
    <alternativeName>
        <fullName evidence="1">rRNA (pseudouridine-N3-)-methyltransferase RlmH</fullName>
    </alternativeName>
</protein>
<proteinExistence type="inferred from homology"/>
<reference key="1">
    <citation type="journal article" date="2010" name="J. Bacteriol.">
        <title>Whole genome sequences of two Xylella fastidiosa strains (M12 and M23) causing almond leaf scorch disease in California.</title>
        <authorList>
            <person name="Chen J."/>
            <person name="Xie G."/>
            <person name="Han S."/>
            <person name="Chertkov O."/>
            <person name="Sims D."/>
            <person name="Civerolo E.L."/>
        </authorList>
    </citation>
    <scope>NUCLEOTIDE SEQUENCE [LARGE SCALE GENOMIC DNA]</scope>
    <source>
        <strain>M23</strain>
    </source>
</reference>
<comment type="function">
    <text evidence="1">Specifically methylates the pseudouridine at position 1915 (m3Psi1915) in 23S rRNA.</text>
</comment>
<comment type="catalytic activity">
    <reaction evidence="1">
        <text>pseudouridine(1915) in 23S rRNA + S-adenosyl-L-methionine = N(3)-methylpseudouridine(1915) in 23S rRNA + S-adenosyl-L-homocysteine + H(+)</text>
        <dbReference type="Rhea" id="RHEA:42752"/>
        <dbReference type="Rhea" id="RHEA-COMP:10221"/>
        <dbReference type="Rhea" id="RHEA-COMP:10222"/>
        <dbReference type="ChEBI" id="CHEBI:15378"/>
        <dbReference type="ChEBI" id="CHEBI:57856"/>
        <dbReference type="ChEBI" id="CHEBI:59789"/>
        <dbReference type="ChEBI" id="CHEBI:65314"/>
        <dbReference type="ChEBI" id="CHEBI:74486"/>
        <dbReference type="EC" id="2.1.1.177"/>
    </reaction>
</comment>
<comment type="subunit">
    <text evidence="1">Homodimer.</text>
</comment>
<comment type="subcellular location">
    <subcellularLocation>
        <location evidence="1">Cytoplasm</location>
    </subcellularLocation>
</comment>
<comment type="similarity">
    <text evidence="1">Belongs to the RNA methyltransferase RlmH family.</text>
</comment>
<name>RLMH_XYLF2</name>
<dbReference type="EC" id="2.1.1.177" evidence="1"/>
<dbReference type="EMBL" id="CP001011">
    <property type="protein sequence ID" value="ACB93210.1"/>
    <property type="molecule type" value="Genomic_DNA"/>
</dbReference>
<dbReference type="RefSeq" id="WP_004089938.1">
    <property type="nucleotide sequence ID" value="NC_010577.1"/>
</dbReference>
<dbReference type="SMR" id="B2I8D4"/>
<dbReference type="GeneID" id="93905550"/>
<dbReference type="KEGG" id="xfn:XfasM23_1807"/>
<dbReference type="HOGENOM" id="CLU_100552_1_0_6"/>
<dbReference type="Proteomes" id="UP000001698">
    <property type="component" value="Chromosome"/>
</dbReference>
<dbReference type="GO" id="GO:0005737">
    <property type="term" value="C:cytoplasm"/>
    <property type="evidence" value="ECO:0007669"/>
    <property type="project" value="UniProtKB-SubCell"/>
</dbReference>
<dbReference type="GO" id="GO:0070038">
    <property type="term" value="F:rRNA (pseudouridine-N3-)-methyltransferase activity"/>
    <property type="evidence" value="ECO:0007669"/>
    <property type="project" value="UniProtKB-UniRule"/>
</dbReference>
<dbReference type="CDD" id="cd18081">
    <property type="entry name" value="RlmH-like"/>
    <property type="match status" value="1"/>
</dbReference>
<dbReference type="Gene3D" id="3.40.1280.10">
    <property type="match status" value="1"/>
</dbReference>
<dbReference type="HAMAP" id="MF_00658">
    <property type="entry name" value="23SrRNA_methyltr_H"/>
    <property type="match status" value="1"/>
</dbReference>
<dbReference type="InterPro" id="IPR029028">
    <property type="entry name" value="Alpha/beta_knot_MTases"/>
</dbReference>
<dbReference type="InterPro" id="IPR003742">
    <property type="entry name" value="RlmH-like"/>
</dbReference>
<dbReference type="InterPro" id="IPR029026">
    <property type="entry name" value="tRNA_m1G_MTases_N"/>
</dbReference>
<dbReference type="NCBIfam" id="NF000986">
    <property type="entry name" value="PRK00103.1-4"/>
    <property type="match status" value="1"/>
</dbReference>
<dbReference type="NCBIfam" id="TIGR00246">
    <property type="entry name" value="tRNA_RlmH_YbeA"/>
    <property type="match status" value="1"/>
</dbReference>
<dbReference type="PANTHER" id="PTHR33603">
    <property type="entry name" value="METHYLTRANSFERASE"/>
    <property type="match status" value="1"/>
</dbReference>
<dbReference type="PANTHER" id="PTHR33603:SF1">
    <property type="entry name" value="RIBOSOMAL RNA LARGE SUBUNIT METHYLTRANSFERASE H"/>
    <property type="match status" value="1"/>
</dbReference>
<dbReference type="Pfam" id="PF02590">
    <property type="entry name" value="SPOUT_MTase"/>
    <property type="match status" value="1"/>
</dbReference>
<dbReference type="PIRSF" id="PIRSF004505">
    <property type="entry name" value="MT_bac"/>
    <property type="match status" value="1"/>
</dbReference>
<dbReference type="SUPFAM" id="SSF75217">
    <property type="entry name" value="alpha/beta knot"/>
    <property type="match status" value="1"/>
</dbReference>
<sequence length="157" mass="17985">MKCLLIATGQHVPTWVAQGFAEYHRRLSYWLPLELVEIEPSMRGKNHDPQRAIEDEGRRVMAALPKQPYAVTLDVKGKPLNSEQLAQRMEHWRGLGRNLVFLIGGPEGHSQEVLNISNERWSLGPLTLPHMLVRLIVVEQLYRAATILTNHPYHRGK</sequence>